<gene>
    <name evidence="1" type="primary">hisE</name>
    <name type="ordered locus">Avi_0038</name>
</gene>
<dbReference type="EC" id="3.6.1.31" evidence="1"/>
<dbReference type="EMBL" id="CP000633">
    <property type="protein sequence ID" value="ACM35000.1"/>
    <property type="molecule type" value="Genomic_DNA"/>
</dbReference>
<dbReference type="RefSeq" id="WP_012654530.1">
    <property type="nucleotide sequence ID" value="NC_011989.1"/>
</dbReference>
<dbReference type="SMR" id="B9JXX0"/>
<dbReference type="STRING" id="311402.Avi_0038"/>
<dbReference type="KEGG" id="avi:Avi_0038"/>
<dbReference type="eggNOG" id="COG0140">
    <property type="taxonomic scope" value="Bacteria"/>
</dbReference>
<dbReference type="HOGENOM" id="CLU_123337_1_1_5"/>
<dbReference type="UniPathway" id="UPA00031">
    <property type="reaction ID" value="UER00007"/>
</dbReference>
<dbReference type="Proteomes" id="UP000001596">
    <property type="component" value="Chromosome 1"/>
</dbReference>
<dbReference type="GO" id="GO:0005737">
    <property type="term" value="C:cytoplasm"/>
    <property type="evidence" value="ECO:0007669"/>
    <property type="project" value="UniProtKB-SubCell"/>
</dbReference>
<dbReference type="GO" id="GO:0005524">
    <property type="term" value="F:ATP binding"/>
    <property type="evidence" value="ECO:0007669"/>
    <property type="project" value="UniProtKB-KW"/>
</dbReference>
<dbReference type="GO" id="GO:0004636">
    <property type="term" value="F:phosphoribosyl-ATP diphosphatase activity"/>
    <property type="evidence" value="ECO:0007669"/>
    <property type="project" value="UniProtKB-UniRule"/>
</dbReference>
<dbReference type="GO" id="GO:0000105">
    <property type="term" value="P:L-histidine biosynthetic process"/>
    <property type="evidence" value="ECO:0007669"/>
    <property type="project" value="UniProtKB-UniRule"/>
</dbReference>
<dbReference type="CDD" id="cd11534">
    <property type="entry name" value="NTP-PPase_HisIE_like"/>
    <property type="match status" value="1"/>
</dbReference>
<dbReference type="Gene3D" id="1.10.287.1080">
    <property type="entry name" value="MazG-like"/>
    <property type="match status" value="1"/>
</dbReference>
<dbReference type="HAMAP" id="MF_01020">
    <property type="entry name" value="HisE"/>
    <property type="match status" value="1"/>
</dbReference>
<dbReference type="InterPro" id="IPR008179">
    <property type="entry name" value="HisE"/>
</dbReference>
<dbReference type="InterPro" id="IPR021130">
    <property type="entry name" value="PRib-ATP_PPHydrolase-like"/>
</dbReference>
<dbReference type="NCBIfam" id="TIGR03188">
    <property type="entry name" value="histidine_hisI"/>
    <property type="match status" value="1"/>
</dbReference>
<dbReference type="NCBIfam" id="NF001611">
    <property type="entry name" value="PRK00400.1-3"/>
    <property type="match status" value="1"/>
</dbReference>
<dbReference type="NCBIfam" id="NF001613">
    <property type="entry name" value="PRK00400.1-5"/>
    <property type="match status" value="1"/>
</dbReference>
<dbReference type="PANTHER" id="PTHR42945">
    <property type="entry name" value="HISTIDINE BIOSYNTHESIS BIFUNCTIONAL PROTEIN"/>
    <property type="match status" value="1"/>
</dbReference>
<dbReference type="PANTHER" id="PTHR42945:SF1">
    <property type="entry name" value="HISTIDINE BIOSYNTHESIS BIFUNCTIONAL PROTEIN HIS7"/>
    <property type="match status" value="1"/>
</dbReference>
<dbReference type="Pfam" id="PF01503">
    <property type="entry name" value="PRA-PH"/>
    <property type="match status" value="1"/>
</dbReference>
<dbReference type="SUPFAM" id="SSF101386">
    <property type="entry name" value="all-alpha NTP pyrophosphatases"/>
    <property type="match status" value="1"/>
</dbReference>
<comment type="catalytic activity">
    <reaction evidence="1">
        <text>1-(5-phospho-beta-D-ribosyl)-ATP + H2O = 1-(5-phospho-beta-D-ribosyl)-5'-AMP + diphosphate + H(+)</text>
        <dbReference type="Rhea" id="RHEA:22828"/>
        <dbReference type="ChEBI" id="CHEBI:15377"/>
        <dbReference type="ChEBI" id="CHEBI:15378"/>
        <dbReference type="ChEBI" id="CHEBI:33019"/>
        <dbReference type="ChEBI" id="CHEBI:59457"/>
        <dbReference type="ChEBI" id="CHEBI:73183"/>
        <dbReference type="EC" id="3.6.1.31"/>
    </reaction>
</comment>
<comment type="pathway">
    <text evidence="1">Amino-acid biosynthesis; L-histidine biosynthesis; L-histidine from 5-phospho-alpha-D-ribose 1-diphosphate: step 2/9.</text>
</comment>
<comment type="subcellular location">
    <subcellularLocation>
        <location evidence="1">Cytoplasm</location>
    </subcellularLocation>
</comment>
<comment type="similarity">
    <text evidence="1">Belongs to the PRA-PH family.</text>
</comment>
<feature type="chain" id="PRO_1000149041" description="Phosphoribosyl-ATP pyrophosphatase">
    <location>
        <begin position="1"/>
        <end position="104"/>
    </location>
</feature>
<protein>
    <recommendedName>
        <fullName evidence="1">Phosphoribosyl-ATP pyrophosphatase</fullName>
        <shortName evidence="1">PRA-PH</shortName>
        <ecNumber evidence="1">3.6.1.31</ecNumber>
    </recommendedName>
</protein>
<evidence type="ECO:0000255" key="1">
    <source>
        <dbReference type="HAMAP-Rule" id="MF_01020"/>
    </source>
</evidence>
<sequence length="104" mass="11330">MSTFTLSDLEAIVAIRAKASPDESWTAKLVTAGQDKAAKKLGEEAIEAVMAAVKNDRANLIYESADLLYHLLVVLKIADIPIETVMEELQRRTAQSGLSEKASR</sequence>
<accession>B9JXX0</accession>
<reference key="1">
    <citation type="journal article" date="2009" name="J. Bacteriol.">
        <title>Genome sequences of three Agrobacterium biovars help elucidate the evolution of multichromosome genomes in bacteria.</title>
        <authorList>
            <person name="Slater S.C."/>
            <person name="Goldman B.S."/>
            <person name="Goodner B."/>
            <person name="Setubal J.C."/>
            <person name="Farrand S.K."/>
            <person name="Nester E.W."/>
            <person name="Burr T.J."/>
            <person name="Banta L."/>
            <person name="Dickerman A.W."/>
            <person name="Paulsen I."/>
            <person name="Otten L."/>
            <person name="Suen G."/>
            <person name="Welch R."/>
            <person name="Almeida N.F."/>
            <person name="Arnold F."/>
            <person name="Burton O.T."/>
            <person name="Du Z."/>
            <person name="Ewing A."/>
            <person name="Godsy E."/>
            <person name="Heisel S."/>
            <person name="Houmiel K.L."/>
            <person name="Jhaveri J."/>
            <person name="Lu J."/>
            <person name="Miller N.M."/>
            <person name="Norton S."/>
            <person name="Chen Q."/>
            <person name="Phoolcharoen W."/>
            <person name="Ohlin V."/>
            <person name="Ondrusek D."/>
            <person name="Pride N."/>
            <person name="Stricklin S.L."/>
            <person name="Sun J."/>
            <person name="Wheeler C."/>
            <person name="Wilson L."/>
            <person name="Zhu H."/>
            <person name="Wood D.W."/>
        </authorList>
    </citation>
    <scope>NUCLEOTIDE SEQUENCE [LARGE SCALE GENOMIC DNA]</scope>
    <source>
        <strain>ATCC BAA-846 / DSM 112012 / S4</strain>
    </source>
</reference>
<organism>
    <name type="scientific">Allorhizobium ampelinum (strain ATCC BAA-846 / DSM 112012 / S4)</name>
    <name type="common">Agrobacterium vitis (strain S4)</name>
    <dbReference type="NCBI Taxonomy" id="311402"/>
    <lineage>
        <taxon>Bacteria</taxon>
        <taxon>Pseudomonadati</taxon>
        <taxon>Pseudomonadota</taxon>
        <taxon>Alphaproteobacteria</taxon>
        <taxon>Hyphomicrobiales</taxon>
        <taxon>Rhizobiaceae</taxon>
        <taxon>Rhizobium/Agrobacterium group</taxon>
        <taxon>Allorhizobium</taxon>
        <taxon>Allorhizobium ampelinum</taxon>
    </lineage>
</organism>
<name>HIS2_ALLAM</name>
<proteinExistence type="inferred from homology"/>
<keyword id="KW-0028">Amino-acid biosynthesis</keyword>
<keyword id="KW-0067">ATP-binding</keyword>
<keyword id="KW-0963">Cytoplasm</keyword>
<keyword id="KW-0368">Histidine biosynthesis</keyword>
<keyword id="KW-0378">Hydrolase</keyword>
<keyword id="KW-0547">Nucleotide-binding</keyword>
<keyword id="KW-1185">Reference proteome</keyword>